<evidence type="ECO:0000255" key="1">
    <source>
        <dbReference type="HAMAP-Rule" id="MF_00440"/>
    </source>
</evidence>
<name>NRDR_NEOSM</name>
<gene>
    <name evidence="1" type="primary">nrdR</name>
    <name type="ordered locus">NSE_0352</name>
</gene>
<protein>
    <recommendedName>
        <fullName evidence="1">Transcriptional repressor NrdR</fullName>
    </recommendedName>
</protein>
<dbReference type="EMBL" id="CP000237">
    <property type="protein sequence ID" value="ABD46431.1"/>
    <property type="molecule type" value="Genomic_DNA"/>
</dbReference>
<dbReference type="RefSeq" id="WP_011451747.1">
    <property type="nucleotide sequence ID" value="NC_007798.1"/>
</dbReference>
<dbReference type="SMR" id="Q2GE55"/>
<dbReference type="STRING" id="222891.NSE_0352"/>
<dbReference type="KEGG" id="nse:NSE_0352"/>
<dbReference type="eggNOG" id="COG1327">
    <property type="taxonomic scope" value="Bacteria"/>
</dbReference>
<dbReference type="HOGENOM" id="CLU_108412_0_1_5"/>
<dbReference type="OrthoDB" id="9807461at2"/>
<dbReference type="Proteomes" id="UP000001942">
    <property type="component" value="Chromosome"/>
</dbReference>
<dbReference type="GO" id="GO:0005524">
    <property type="term" value="F:ATP binding"/>
    <property type="evidence" value="ECO:0007669"/>
    <property type="project" value="UniProtKB-KW"/>
</dbReference>
<dbReference type="GO" id="GO:0003677">
    <property type="term" value="F:DNA binding"/>
    <property type="evidence" value="ECO:0007669"/>
    <property type="project" value="UniProtKB-KW"/>
</dbReference>
<dbReference type="GO" id="GO:0008270">
    <property type="term" value="F:zinc ion binding"/>
    <property type="evidence" value="ECO:0007669"/>
    <property type="project" value="UniProtKB-UniRule"/>
</dbReference>
<dbReference type="GO" id="GO:0045892">
    <property type="term" value="P:negative regulation of DNA-templated transcription"/>
    <property type="evidence" value="ECO:0007669"/>
    <property type="project" value="UniProtKB-UniRule"/>
</dbReference>
<dbReference type="HAMAP" id="MF_00440">
    <property type="entry name" value="NrdR"/>
    <property type="match status" value="1"/>
</dbReference>
<dbReference type="InterPro" id="IPR005144">
    <property type="entry name" value="ATP-cone_dom"/>
</dbReference>
<dbReference type="InterPro" id="IPR055173">
    <property type="entry name" value="NrdR-like_N"/>
</dbReference>
<dbReference type="InterPro" id="IPR003796">
    <property type="entry name" value="RNR_NrdR-like"/>
</dbReference>
<dbReference type="NCBIfam" id="TIGR00244">
    <property type="entry name" value="transcriptional regulator NrdR"/>
    <property type="match status" value="1"/>
</dbReference>
<dbReference type="PANTHER" id="PTHR30455">
    <property type="entry name" value="TRANSCRIPTIONAL REPRESSOR NRDR"/>
    <property type="match status" value="1"/>
</dbReference>
<dbReference type="PANTHER" id="PTHR30455:SF2">
    <property type="entry name" value="TRANSCRIPTIONAL REPRESSOR NRDR"/>
    <property type="match status" value="1"/>
</dbReference>
<dbReference type="Pfam" id="PF03477">
    <property type="entry name" value="ATP-cone"/>
    <property type="match status" value="1"/>
</dbReference>
<dbReference type="Pfam" id="PF22811">
    <property type="entry name" value="Zn_ribbon_NrdR"/>
    <property type="match status" value="1"/>
</dbReference>
<dbReference type="PROSITE" id="PS51161">
    <property type="entry name" value="ATP_CONE"/>
    <property type="match status" value="1"/>
</dbReference>
<sequence length="149" mass="17212">MKCPFCGNRDTNVRDSRSVNEGTFIKRRRFCGECGAKFTTFETIQLKEIKVIKKNGSCESFDREKAMRSVEVALRKRPVTRERVDELMNSVIYKIERIHDAKITAKVIGELIMEELATLDKVAFIRFASVYMNFENEKDFVQLIGSLTS</sequence>
<comment type="function">
    <text evidence="1">Negatively regulates transcription of bacterial ribonucleotide reductase nrd genes and operons by binding to NrdR-boxes.</text>
</comment>
<comment type="cofactor">
    <cofactor evidence="1">
        <name>Zn(2+)</name>
        <dbReference type="ChEBI" id="CHEBI:29105"/>
    </cofactor>
    <text evidence="1">Binds 1 zinc ion.</text>
</comment>
<comment type="similarity">
    <text evidence="1">Belongs to the NrdR family.</text>
</comment>
<organism>
    <name type="scientific">Neorickettsia sennetsu (strain ATCC VR-367 / Miyayama)</name>
    <name type="common">Ehrlichia sennetsu</name>
    <dbReference type="NCBI Taxonomy" id="222891"/>
    <lineage>
        <taxon>Bacteria</taxon>
        <taxon>Pseudomonadati</taxon>
        <taxon>Pseudomonadota</taxon>
        <taxon>Alphaproteobacteria</taxon>
        <taxon>Rickettsiales</taxon>
        <taxon>Anaplasmataceae</taxon>
        <taxon>Neorickettsia</taxon>
    </lineage>
</organism>
<keyword id="KW-0067">ATP-binding</keyword>
<keyword id="KW-0238">DNA-binding</keyword>
<keyword id="KW-0479">Metal-binding</keyword>
<keyword id="KW-0547">Nucleotide-binding</keyword>
<keyword id="KW-0678">Repressor</keyword>
<keyword id="KW-0804">Transcription</keyword>
<keyword id="KW-0805">Transcription regulation</keyword>
<keyword id="KW-0862">Zinc</keyword>
<keyword id="KW-0863">Zinc-finger</keyword>
<feature type="chain" id="PRO_0000264190" description="Transcriptional repressor NrdR">
    <location>
        <begin position="1"/>
        <end position="149"/>
    </location>
</feature>
<feature type="domain" description="ATP-cone" evidence="1">
    <location>
        <begin position="49"/>
        <end position="139"/>
    </location>
</feature>
<feature type="zinc finger region" evidence="1">
    <location>
        <begin position="3"/>
        <end position="34"/>
    </location>
</feature>
<reference key="1">
    <citation type="journal article" date="2006" name="PLoS Genet.">
        <title>Comparative genomics of emerging human ehrlichiosis agents.</title>
        <authorList>
            <person name="Dunning Hotopp J.C."/>
            <person name="Lin M."/>
            <person name="Madupu R."/>
            <person name="Crabtree J."/>
            <person name="Angiuoli S.V."/>
            <person name="Eisen J.A."/>
            <person name="Seshadri R."/>
            <person name="Ren Q."/>
            <person name="Wu M."/>
            <person name="Utterback T.R."/>
            <person name="Smith S."/>
            <person name="Lewis M."/>
            <person name="Khouri H."/>
            <person name="Zhang C."/>
            <person name="Niu H."/>
            <person name="Lin Q."/>
            <person name="Ohashi N."/>
            <person name="Zhi N."/>
            <person name="Nelson W.C."/>
            <person name="Brinkac L.M."/>
            <person name="Dodson R.J."/>
            <person name="Rosovitz M.J."/>
            <person name="Sundaram J.P."/>
            <person name="Daugherty S.C."/>
            <person name="Davidsen T."/>
            <person name="Durkin A.S."/>
            <person name="Gwinn M.L."/>
            <person name="Haft D.H."/>
            <person name="Selengut J.D."/>
            <person name="Sullivan S.A."/>
            <person name="Zafar N."/>
            <person name="Zhou L."/>
            <person name="Benahmed F."/>
            <person name="Forberger H."/>
            <person name="Halpin R."/>
            <person name="Mulligan S."/>
            <person name="Robinson J."/>
            <person name="White O."/>
            <person name="Rikihisa Y."/>
            <person name="Tettelin H."/>
        </authorList>
    </citation>
    <scope>NUCLEOTIDE SEQUENCE [LARGE SCALE GENOMIC DNA]</scope>
    <source>
        <strain>ATCC VR-367 / Miyayama</strain>
    </source>
</reference>
<proteinExistence type="inferred from homology"/>
<accession>Q2GE55</accession>